<comment type="function">
    <text>May be involved in the secretion of the autolysin blyA.</text>
</comment>
<comment type="subcellular location">
    <subcellularLocation>
        <location evidence="2">Host membrane</location>
        <topology evidence="2">Multi-pass membrane protein</topology>
    </subcellularLocation>
</comment>
<comment type="similarity">
    <text evidence="2">Belongs to the SPP1 holin family.</text>
</comment>
<feature type="chain" id="PRO_0000164430" description="Protein bhlB">
    <location>
        <begin position="1"/>
        <end position="88"/>
    </location>
</feature>
<feature type="transmembrane region" description="Helical" evidence="1">
    <location>
        <begin position="15"/>
        <end position="35"/>
    </location>
</feature>
<feature type="transmembrane region" description="Helical" evidence="1">
    <location>
        <begin position="45"/>
        <end position="65"/>
    </location>
</feature>
<evidence type="ECO:0000255" key="1"/>
<evidence type="ECO:0000305" key="2"/>
<sequence length="88" mass="10120">MFENIDKGTIVRTLLLAIALLNQIMVMLGKAAFIINEEDINHLYDCLYTIFTIVFTTSTTTAAWFKNNYITAKGKKQKQVLKKENLFK</sequence>
<protein>
    <recommendedName>
        <fullName>Protein bhlB</fullName>
    </recommendedName>
</protein>
<organismHost>
    <name type="scientific">Bacillus pumilus</name>
    <name type="common">Bacillus mesentericus</name>
    <dbReference type="NCBI Taxonomy" id="1408"/>
</organismHost>
<organismHost>
    <name type="scientific">Bacillus subtilis</name>
    <dbReference type="NCBI Taxonomy" id="1423"/>
</organismHost>
<gene>
    <name type="primary">bhlB</name>
    <name type="ordered locus">SPBc2p025</name>
</gene>
<organism>
    <name type="scientific">Bacillus phage SPbeta</name>
    <name type="common">Bacillus phage SPBc2</name>
    <name type="synonym">Bacteriophage SP-beta</name>
    <dbReference type="NCBI Taxonomy" id="2932878"/>
    <lineage>
        <taxon>Viruses</taxon>
        <taxon>Duplodnaviria</taxon>
        <taxon>Heunggongvirae</taxon>
        <taxon>Uroviricota</taxon>
        <taxon>Caudoviricetes</taxon>
        <taxon>Spbetavirus</taxon>
        <taxon>Spbetavirus SPbeta</taxon>
    </lineage>
</organism>
<reference key="1">
    <citation type="journal article" date="1999" name="Microbiology">
        <title>Nucleotide sequence of the Bacillus subtilis temperate bacteriophage SPbetac2.</title>
        <authorList>
            <person name="Lazarevic V."/>
            <person name="Duesterhoeft A."/>
            <person name="Soldo B."/>
            <person name="Hilbert H."/>
            <person name="Mauel C."/>
            <person name="Karamata D."/>
        </authorList>
    </citation>
    <scope>NUCLEOTIDE SEQUENCE [LARGE SCALE GENOMIC DNA]</scope>
</reference>
<proteinExistence type="inferred from homology"/>
<name>BHLB_BPSPB</name>
<dbReference type="EMBL" id="AF020713">
    <property type="protein sequence ID" value="AAC12997.1"/>
    <property type="molecule type" value="Genomic_DNA"/>
</dbReference>
<dbReference type="PIR" id="T12788">
    <property type="entry name" value="T12788"/>
</dbReference>
<dbReference type="KEGG" id="vg:1261365"/>
<dbReference type="Proteomes" id="UP000009091">
    <property type="component" value="Genome"/>
</dbReference>
<dbReference type="GO" id="GO:0033644">
    <property type="term" value="C:host cell membrane"/>
    <property type="evidence" value="ECO:0007669"/>
    <property type="project" value="UniProtKB-SubCell"/>
</dbReference>
<dbReference type="GO" id="GO:0016020">
    <property type="term" value="C:membrane"/>
    <property type="evidence" value="ECO:0007669"/>
    <property type="project" value="UniProtKB-KW"/>
</dbReference>
<dbReference type="InterPro" id="IPR006479">
    <property type="entry name" value="Holin"/>
</dbReference>
<dbReference type="NCBIfam" id="TIGR01592">
    <property type="entry name" value="holin_SPP1"/>
    <property type="match status" value="1"/>
</dbReference>
<dbReference type="Pfam" id="PF04688">
    <property type="entry name" value="Holin_SPP1"/>
    <property type="match status" value="1"/>
</dbReference>
<keyword id="KW-1043">Host membrane</keyword>
<keyword id="KW-0472">Membrane</keyword>
<keyword id="KW-1185">Reference proteome</keyword>
<keyword id="KW-0812">Transmembrane</keyword>
<keyword id="KW-1133">Transmembrane helix</keyword>
<accession>O64038</accession>